<proteinExistence type="evidence at protein level"/>
<feature type="chain" id="PRO_0000112556" description="Ethylene-responsive transcription factor 4">
    <location>
        <begin position="1"/>
        <end position="225"/>
    </location>
</feature>
<feature type="DNA-binding region" description="AP2/ERF" evidence="3">
    <location>
        <begin position="26"/>
        <end position="83"/>
    </location>
</feature>
<feature type="region of interest" description="Disordered" evidence="4">
    <location>
        <begin position="1"/>
        <end position="25"/>
    </location>
</feature>
<feature type="region of interest" description="Disordered" evidence="4">
    <location>
        <begin position="67"/>
        <end position="112"/>
    </location>
</feature>
<feature type="region of interest" description="Interaction with UBC2" evidence="9">
    <location>
        <begin position="92"/>
        <end position="196"/>
    </location>
</feature>
<feature type="short sequence motif" description="EAR-like (transcriptional repression)" evidence="2">
    <location>
        <begin position="215"/>
        <end position="221"/>
    </location>
</feature>
<feature type="compositionally biased region" description="Polar residues" evidence="4">
    <location>
        <begin position="1"/>
        <end position="11"/>
    </location>
</feature>
<feature type="compositionally biased region" description="Low complexity" evidence="4">
    <location>
        <begin position="90"/>
        <end position="101"/>
    </location>
</feature>
<gene>
    <name type="primary">ERF4</name>
    <name type="synonym">ERF-3</name>
    <name type="synonym">ERF3</name>
</gene>
<keyword id="KW-0238">DNA-binding</keyword>
<keyword id="KW-0936">Ethylene signaling pathway</keyword>
<keyword id="KW-0539">Nucleus</keyword>
<keyword id="KW-0611">Plant defense</keyword>
<keyword id="KW-1185">Reference proteome</keyword>
<keyword id="KW-0678">Repressor</keyword>
<keyword id="KW-0804">Transcription</keyword>
<keyword id="KW-0805">Transcription regulation</keyword>
<keyword id="KW-0832">Ubl conjugation</keyword>
<name>ERF4_TOBAC</name>
<organism>
    <name type="scientific">Nicotiana tabacum</name>
    <name type="common">Common tobacco</name>
    <dbReference type="NCBI Taxonomy" id="4097"/>
    <lineage>
        <taxon>Eukaryota</taxon>
        <taxon>Viridiplantae</taxon>
        <taxon>Streptophyta</taxon>
        <taxon>Embryophyta</taxon>
        <taxon>Tracheophyta</taxon>
        <taxon>Spermatophyta</taxon>
        <taxon>Magnoliopsida</taxon>
        <taxon>eudicotyledons</taxon>
        <taxon>Gunneridae</taxon>
        <taxon>Pentapetalae</taxon>
        <taxon>asterids</taxon>
        <taxon>lamiids</taxon>
        <taxon>Solanales</taxon>
        <taxon>Solanaceae</taxon>
        <taxon>Nicotianoideae</taxon>
        <taxon>Nicotianeae</taxon>
        <taxon>Nicotiana</taxon>
    </lineage>
</organism>
<accession>Q40477</accession>
<dbReference type="EMBL" id="D38124">
    <property type="protein sequence ID" value="BAA07322.1"/>
    <property type="molecule type" value="mRNA"/>
</dbReference>
<dbReference type="PIR" id="T02433">
    <property type="entry name" value="T02433"/>
</dbReference>
<dbReference type="RefSeq" id="NP_001312182.1">
    <property type="nucleotide sequence ID" value="NM_001325253.1"/>
</dbReference>
<dbReference type="SMR" id="Q40477"/>
<dbReference type="STRING" id="4097.Q40477"/>
<dbReference type="PaxDb" id="4097-Q40477"/>
<dbReference type="GeneID" id="107778042"/>
<dbReference type="KEGG" id="nta:107778042"/>
<dbReference type="OMA" id="AVNEVHY"/>
<dbReference type="OrthoDB" id="1931494at2759"/>
<dbReference type="Proteomes" id="UP000084051">
    <property type="component" value="Unplaced"/>
</dbReference>
<dbReference type="GO" id="GO:0005634">
    <property type="term" value="C:nucleus"/>
    <property type="evidence" value="ECO:0007669"/>
    <property type="project" value="UniProtKB-SubCell"/>
</dbReference>
<dbReference type="GO" id="GO:0003677">
    <property type="term" value="F:DNA binding"/>
    <property type="evidence" value="ECO:0007669"/>
    <property type="project" value="UniProtKB-KW"/>
</dbReference>
<dbReference type="GO" id="GO:0003700">
    <property type="term" value="F:DNA-binding transcription factor activity"/>
    <property type="evidence" value="ECO:0007669"/>
    <property type="project" value="InterPro"/>
</dbReference>
<dbReference type="GO" id="GO:0006952">
    <property type="term" value="P:defense response"/>
    <property type="evidence" value="ECO:0007669"/>
    <property type="project" value="UniProtKB-KW"/>
</dbReference>
<dbReference type="GO" id="GO:0009873">
    <property type="term" value="P:ethylene-activated signaling pathway"/>
    <property type="evidence" value="ECO:0007669"/>
    <property type="project" value="UniProtKB-KW"/>
</dbReference>
<dbReference type="CDD" id="cd00018">
    <property type="entry name" value="AP2"/>
    <property type="match status" value="1"/>
</dbReference>
<dbReference type="FunFam" id="3.30.730.10:FF:000001">
    <property type="entry name" value="Ethylene-responsive transcription factor 2"/>
    <property type="match status" value="1"/>
</dbReference>
<dbReference type="Gene3D" id="3.30.730.10">
    <property type="entry name" value="AP2/ERF domain"/>
    <property type="match status" value="1"/>
</dbReference>
<dbReference type="InterPro" id="IPR001471">
    <property type="entry name" value="AP2/ERF_dom"/>
</dbReference>
<dbReference type="InterPro" id="IPR036955">
    <property type="entry name" value="AP2/ERF_dom_sf"/>
</dbReference>
<dbReference type="InterPro" id="IPR016177">
    <property type="entry name" value="DNA-bd_dom_sf"/>
</dbReference>
<dbReference type="PANTHER" id="PTHR31677">
    <property type="entry name" value="AP2 DOMAIN CLASS TRANSCRIPTION FACTOR"/>
    <property type="match status" value="1"/>
</dbReference>
<dbReference type="PANTHER" id="PTHR31677:SF242">
    <property type="entry name" value="ETHYLENE-RESPONSIVE TRANSCRIPTION FACTOR 4"/>
    <property type="match status" value="1"/>
</dbReference>
<dbReference type="Pfam" id="PF00847">
    <property type="entry name" value="AP2"/>
    <property type="match status" value="1"/>
</dbReference>
<dbReference type="PRINTS" id="PR00367">
    <property type="entry name" value="ETHRSPELEMNT"/>
</dbReference>
<dbReference type="SMART" id="SM00380">
    <property type="entry name" value="AP2"/>
    <property type="match status" value="1"/>
</dbReference>
<dbReference type="SUPFAM" id="SSF54171">
    <property type="entry name" value="DNA-binding domain"/>
    <property type="match status" value="1"/>
</dbReference>
<dbReference type="PROSITE" id="PS51032">
    <property type="entry name" value="AP2_ERF"/>
    <property type="match status" value="1"/>
</dbReference>
<evidence type="ECO:0000250" key="1"/>
<evidence type="ECO:0000255" key="2"/>
<evidence type="ECO:0000255" key="3">
    <source>
        <dbReference type="PROSITE-ProRule" id="PRU00366"/>
    </source>
</evidence>
<evidence type="ECO:0000256" key="4">
    <source>
        <dbReference type="SAM" id="MobiDB-lite"/>
    </source>
</evidence>
<evidence type="ECO:0000269" key="5">
    <source>
    </source>
</evidence>
<evidence type="ECO:0000269" key="6">
    <source>
    </source>
</evidence>
<evidence type="ECO:0000269" key="7">
    <source>
    </source>
</evidence>
<evidence type="ECO:0000269" key="8">
    <source>
    </source>
</evidence>
<evidence type="ECO:0000269" key="9">
    <source>
    </source>
</evidence>
<evidence type="ECO:0000269" key="10">
    <source>
    </source>
</evidence>
<evidence type="ECO:0000269" key="11">
    <source ref="2"/>
</evidence>
<evidence type="ECO:0000305" key="12"/>
<reference key="1">
    <citation type="journal article" date="1995" name="Plant Cell">
        <title>Ethylene-inducible DNA binding proteins that interact with an ethylene responsive element.</title>
        <authorList>
            <person name="Ohme-Takagi M."/>
            <person name="Shinshi H."/>
        </authorList>
    </citation>
    <scope>NUCLEOTIDE SEQUENCE [MRNA]</scope>
    <scope>FUNCTION</scope>
    <scope>INDUCTION</scope>
    <scope>TISSUE SPECIFICITY</scope>
    <source>
        <strain>cv. Bright Yellow 4</strain>
        <tissue>Leaf</tissue>
    </source>
</reference>
<reference key="2">
    <citation type="journal article" date="1998" name="Plant J.">
        <title>Immediate early induction of mRNAs for ethylene-responsive transcription factors in tobacco leaf strips after cutting.</title>
        <authorList>
            <person name="Suzuki K."/>
            <person name="Suzuki N."/>
            <person name="Ohme-Takagi M."/>
            <person name="Shinshi H."/>
        </authorList>
    </citation>
    <scope>FUNCTION</scope>
    <scope>INDUCTION</scope>
</reference>
<reference key="3">
    <citation type="journal article" date="1999" name="Plant J.">
        <title>Elicitor-responsive, ethylene-independent activation of GCC box-mediated transcription that is regulated by both protein phosphorylation and dephosphorylation in cultured tobacco cells.</title>
        <authorList>
            <person name="Yamamoto S."/>
            <person name="Suzuki K."/>
            <person name="Shinshi H."/>
        </authorList>
    </citation>
    <scope>FUNCTION</scope>
    <scope>INDUCTION</scope>
</reference>
<reference key="4">
    <citation type="journal article" date="2000" name="Plant J.">
        <title>Three ethylene-responsive transcription factors in tobacco with distinct transactivation functions.</title>
        <authorList>
            <person name="Ohta M."/>
            <person name="Ohme-Takagi M."/>
            <person name="Shinshi H."/>
        </authorList>
    </citation>
    <scope>FUNCTION</scope>
    <scope>SUBCELLULAR LOCATION</scope>
</reference>
<reference key="5">
    <citation type="journal article" date="2001" name="Biosci. Biotechnol. Biochem.">
        <title>Expression of PR-5d and ERF genes in cultured tobacco cells and their NaCl stress-response.</title>
        <authorList>
            <person name="Koyama T."/>
            <person name="Kitajima S."/>
            <person name="Sato F."/>
        </authorList>
    </citation>
    <scope>TISSUE SPECIFICITY</scope>
</reference>
<reference key="6">
    <citation type="journal article" date="2002" name="Plant Mol. Biol.">
        <title>Wounding activates immediate early transcription of genes for ERFs in tobacco plants.</title>
        <authorList>
            <person name="Nishiuchi T."/>
            <person name="Suzuki K."/>
            <person name="Kitajima S."/>
            <person name="Sato F."/>
            <person name="Shinshi H."/>
        </authorList>
    </citation>
    <scope>INDUCTION</scope>
</reference>
<reference key="7">
    <citation type="journal article" date="2003" name="J. Exp. Bot.">
        <title>Isolation of tobacco ubiquitin-conjugating enzyme cDNA in a yeast two-hybrid system with tobacco ERF3 as bait and its characterization of specific interaction.</title>
        <authorList>
            <person name="Koyama T."/>
            <person name="Okada T."/>
            <person name="Kitajima S."/>
            <person name="Ohme-Takagi M."/>
            <person name="Shinshi H."/>
            <person name="Sato F."/>
        </authorList>
    </citation>
    <scope>FUNCTION</scope>
    <scope>PROBABLE UBIQUITINATION</scope>
    <scope>INTERACTION WITH UBC2</scope>
</reference>
<comment type="function">
    <text evidence="1 5 6 9 10 11">Acts as a transcriptional repressor. Binds to the GCC-box pathogenesis-related promoter element. Involved in the regulation of gene expression by stress factors and by components of stress signal transduction pathways mediated by ethylene, that seems to depend on a protein kinase/phosphatase cascade, and to be influenced by methyl-jasmonate. May regulate other AtERFs (By similarity).</text>
</comment>
<comment type="subunit">
    <text evidence="9">Interacts with UBC2.</text>
</comment>
<comment type="subcellular location">
    <subcellularLocation>
        <location evidence="3 6">Nucleus</location>
    </subcellularLocation>
</comment>
<comment type="tissue specificity">
    <text evidence="7 10">Expressed in roots, in cultured cells and at low levels in buds and leaves. Highly expressed in cell culture, especially during the exponential phase.</text>
</comment>
<comment type="induction">
    <text evidence="5 8 10 11">Strongly induced by ethephon (ethylene-releasing compound) in buds and to lower extent in leaves. Strongly induced by cycloheximide and mechanical stimuli. Wounding leads to a both local and systemical transient expression, independently of ethylene, and through a de-novo-protein-synthesis-independent regulation. Not influenced by methyl-jasmonate. Induction by purified xylanase from Trichoderma viride (TvX) and another elicitor from Phytophthora infestans (PiE), that appears to be mediated by a protein kinase cascade, and to be negatively regulated by protein phosphatases.</text>
</comment>
<comment type="domain">
    <text evidence="1">The AP2/ERF domain binds specifically to the 5'-GCCGCC-3' motif. The affinity of this binding is higher if the seventh amino-acid of this domain is basic (By similarity).</text>
</comment>
<comment type="domain">
    <text evidence="1">Contains a slightly degenerated ERF-associated amphiphilic repression (EAR) motif, which may be involved in the activity of transcriptional repression.</text>
</comment>
<comment type="PTM">
    <text evidence="12">Probably negatively regulated by UBC2, that targets it to the ubiquitin proteasome pathway after ubiquitination and leads it to proteolysis.</text>
</comment>
<comment type="similarity">
    <text evidence="12">Belongs to the ethylene-response factor family. Class 2 subfamily.</text>
</comment>
<comment type="caution">
    <text evidence="12">Was named ERF3 but it corresponds to Arabidopsis ERF4.</text>
</comment>
<protein>
    <recommendedName>
        <fullName>Ethylene-responsive transcription factor 4</fullName>
    </recommendedName>
    <alternativeName>
        <fullName>Ethylene-responsive element-binding factor 3</fullName>
        <shortName>EREBP-3</shortName>
    </alternativeName>
    <alternativeName>
        <fullName>Ethylene-responsive element-binding factor 4 homolog</fullName>
    </alternativeName>
    <alternativeName>
        <fullName>NtERF3</fullName>
    </alternativeName>
</protein>
<sequence length="225" mass="24262">MAVKNKVSNGNLKGGNVKTDGVKEVHYRGVRKRPWGRYAAEIRDPGKKSRVWLGTFDTAEEAAKAYDTAAREFRGPKAKTNFPSPTENQSPSHSSTVESSSGENGVHAPPHAPLELDLTRRLGSVAADGGDNCRRSGEVGYPIFHQQPTVAVLPNGQPVLLFDSLWRAGVVNRPQPYHVTPMGFNGVNAGVGPTVSDSSSAVEENQYDGKRGIDLDLNLAPPMEF</sequence>